<organism>
    <name type="scientific">Stenotrophomonas maltophilia (strain K279a)</name>
    <dbReference type="NCBI Taxonomy" id="522373"/>
    <lineage>
        <taxon>Bacteria</taxon>
        <taxon>Pseudomonadati</taxon>
        <taxon>Pseudomonadota</taxon>
        <taxon>Gammaproteobacteria</taxon>
        <taxon>Lysobacterales</taxon>
        <taxon>Lysobacteraceae</taxon>
        <taxon>Stenotrophomonas</taxon>
        <taxon>Stenotrophomonas maltophilia group</taxon>
    </lineage>
</organism>
<keyword id="KW-0028">Amino-acid biosynthesis</keyword>
<keyword id="KW-0057">Aromatic amino acid biosynthesis</keyword>
<keyword id="KW-0456">Lyase</keyword>
<keyword id="KW-1185">Reference proteome</keyword>
<sequence length="147" mass="15705">MAKLLVLHGPNLNLLGTREPEVYGHTTLADIDQALASQASAAGHAVESLQSNAEHVLVDRVQAARDDGTAFILINPAAFTHTSVALRDALAAVAVPFIEIHLSNPHTREPFRQHSYFSDKAVGVVCGFGADSYRYAMDAALLRVSAT</sequence>
<comment type="function">
    <text evidence="1">Catalyzes a trans-dehydration via an enolate intermediate.</text>
</comment>
<comment type="catalytic activity">
    <reaction evidence="1">
        <text>3-dehydroquinate = 3-dehydroshikimate + H2O</text>
        <dbReference type="Rhea" id="RHEA:21096"/>
        <dbReference type="ChEBI" id="CHEBI:15377"/>
        <dbReference type="ChEBI" id="CHEBI:16630"/>
        <dbReference type="ChEBI" id="CHEBI:32364"/>
        <dbReference type="EC" id="4.2.1.10"/>
    </reaction>
</comment>
<comment type="pathway">
    <text evidence="1">Metabolic intermediate biosynthesis; chorismate biosynthesis; chorismate from D-erythrose 4-phosphate and phosphoenolpyruvate: step 3/7.</text>
</comment>
<comment type="subunit">
    <text evidence="1">Homododecamer.</text>
</comment>
<comment type="similarity">
    <text evidence="1">Belongs to the type-II 3-dehydroquinase family.</text>
</comment>
<evidence type="ECO:0000255" key="1">
    <source>
        <dbReference type="HAMAP-Rule" id="MF_00169"/>
    </source>
</evidence>
<proteinExistence type="inferred from homology"/>
<feature type="chain" id="PRO_1000097626" description="3-dehydroquinate dehydratase">
    <location>
        <begin position="1"/>
        <end position="147"/>
    </location>
</feature>
<feature type="active site" description="Proton acceptor" evidence="1">
    <location>
        <position position="23"/>
    </location>
</feature>
<feature type="active site" description="Proton donor" evidence="1">
    <location>
        <position position="101"/>
    </location>
</feature>
<feature type="binding site" evidence="1">
    <location>
        <position position="75"/>
    </location>
    <ligand>
        <name>substrate</name>
    </ligand>
</feature>
<feature type="binding site" evidence="1">
    <location>
        <position position="81"/>
    </location>
    <ligand>
        <name>substrate</name>
    </ligand>
</feature>
<feature type="binding site" evidence="1">
    <location>
        <position position="88"/>
    </location>
    <ligand>
        <name>substrate</name>
    </ligand>
</feature>
<feature type="binding site" evidence="1">
    <location>
        <begin position="102"/>
        <end position="103"/>
    </location>
    <ligand>
        <name>substrate</name>
    </ligand>
</feature>
<feature type="binding site" evidence="1">
    <location>
        <position position="112"/>
    </location>
    <ligand>
        <name>substrate</name>
    </ligand>
</feature>
<feature type="site" description="Transition state stabilizer" evidence="1">
    <location>
        <position position="18"/>
    </location>
</feature>
<gene>
    <name evidence="1" type="primary">aroQ</name>
    <name type="ordered locus">Smlt4239</name>
</gene>
<protein>
    <recommendedName>
        <fullName evidence="1">3-dehydroquinate dehydratase</fullName>
        <shortName evidence="1">3-dehydroquinase</shortName>
        <ecNumber evidence="1">4.2.1.10</ecNumber>
    </recommendedName>
    <alternativeName>
        <fullName evidence="1">Type II DHQase</fullName>
    </alternativeName>
</protein>
<dbReference type="EC" id="4.2.1.10" evidence="1"/>
<dbReference type="EMBL" id="AM743169">
    <property type="protein sequence ID" value="CAQ47628.1"/>
    <property type="molecule type" value="Genomic_DNA"/>
</dbReference>
<dbReference type="RefSeq" id="WP_005411251.1">
    <property type="nucleotide sequence ID" value="NC_010943.1"/>
</dbReference>
<dbReference type="SMR" id="B2FJN5"/>
<dbReference type="EnsemblBacteria" id="CAQ47628">
    <property type="protein sequence ID" value="CAQ47628"/>
    <property type="gene ID" value="Smlt4239"/>
</dbReference>
<dbReference type="GeneID" id="93835198"/>
<dbReference type="KEGG" id="sml:Smlt4239"/>
<dbReference type="eggNOG" id="COG0757">
    <property type="taxonomic scope" value="Bacteria"/>
</dbReference>
<dbReference type="HOGENOM" id="CLU_090968_1_0_6"/>
<dbReference type="UniPathway" id="UPA00053">
    <property type="reaction ID" value="UER00086"/>
</dbReference>
<dbReference type="Proteomes" id="UP000008840">
    <property type="component" value="Chromosome"/>
</dbReference>
<dbReference type="GO" id="GO:0003855">
    <property type="term" value="F:3-dehydroquinate dehydratase activity"/>
    <property type="evidence" value="ECO:0007669"/>
    <property type="project" value="UniProtKB-UniRule"/>
</dbReference>
<dbReference type="GO" id="GO:0008652">
    <property type="term" value="P:amino acid biosynthetic process"/>
    <property type="evidence" value="ECO:0007669"/>
    <property type="project" value="UniProtKB-KW"/>
</dbReference>
<dbReference type="GO" id="GO:0009073">
    <property type="term" value="P:aromatic amino acid family biosynthetic process"/>
    <property type="evidence" value="ECO:0007669"/>
    <property type="project" value="UniProtKB-KW"/>
</dbReference>
<dbReference type="GO" id="GO:0009423">
    <property type="term" value="P:chorismate biosynthetic process"/>
    <property type="evidence" value="ECO:0007669"/>
    <property type="project" value="UniProtKB-UniRule"/>
</dbReference>
<dbReference type="GO" id="GO:0019631">
    <property type="term" value="P:quinate catabolic process"/>
    <property type="evidence" value="ECO:0007669"/>
    <property type="project" value="TreeGrafter"/>
</dbReference>
<dbReference type="CDD" id="cd00466">
    <property type="entry name" value="DHQase_II"/>
    <property type="match status" value="1"/>
</dbReference>
<dbReference type="Gene3D" id="3.40.50.9100">
    <property type="entry name" value="Dehydroquinase, class II"/>
    <property type="match status" value="1"/>
</dbReference>
<dbReference type="HAMAP" id="MF_00169">
    <property type="entry name" value="AroQ"/>
    <property type="match status" value="1"/>
</dbReference>
<dbReference type="InterPro" id="IPR001874">
    <property type="entry name" value="DHquinase_II"/>
</dbReference>
<dbReference type="InterPro" id="IPR018509">
    <property type="entry name" value="DHquinase_II_CS"/>
</dbReference>
<dbReference type="InterPro" id="IPR036441">
    <property type="entry name" value="DHquinase_II_sf"/>
</dbReference>
<dbReference type="NCBIfam" id="TIGR01088">
    <property type="entry name" value="aroQ"/>
    <property type="match status" value="1"/>
</dbReference>
<dbReference type="NCBIfam" id="NF003804">
    <property type="entry name" value="PRK05395.1-1"/>
    <property type="match status" value="1"/>
</dbReference>
<dbReference type="NCBIfam" id="NF003805">
    <property type="entry name" value="PRK05395.1-2"/>
    <property type="match status" value="1"/>
</dbReference>
<dbReference type="NCBIfam" id="NF003806">
    <property type="entry name" value="PRK05395.1-3"/>
    <property type="match status" value="1"/>
</dbReference>
<dbReference type="NCBIfam" id="NF003807">
    <property type="entry name" value="PRK05395.1-4"/>
    <property type="match status" value="1"/>
</dbReference>
<dbReference type="PANTHER" id="PTHR21272">
    <property type="entry name" value="CATABOLIC 3-DEHYDROQUINASE"/>
    <property type="match status" value="1"/>
</dbReference>
<dbReference type="PANTHER" id="PTHR21272:SF3">
    <property type="entry name" value="CATABOLIC 3-DEHYDROQUINASE"/>
    <property type="match status" value="1"/>
</dbReference>
<dbReference type="Pfam" id="PF01220">
    <property type="entry name" value="DHquinase_II"/>
    <property type="match status" value="1"/>
</dbReference>
<dbReference type="PIRSF" id="PIRSF001399">
    <property type="entry name" value="DHquinase_II"/>
    <property type="match status" value="1"/>
</dbReference>
<dbReference type="SUPFAM" id="SSF52304">
    <property type="entry name" value="Type II 3-dehydroquinate dehydratase"/>
    <property type="match status" value="1"/>
</dbReference>
<dbReference type="PROSITE" id="PS01029">
    <property type="entry name" value="DEHYDROQUINASE_II"/>
    <property type="match status" value="1"/>
</dbReference>
<reference key="1">
    <citation type="journal article" date="2008" name="Genome Biol.">
        <title>The complete genome, comparative and functional analysis of Stenotrophomonas maltophilia reveals an organism heavily shielded by drug resistance determinants.</title>
        <authorList>
            <person name="Crossman L.C."/>
            <person name="Gould V.C."/>
            <person name="Dow J.M."/>
            <person name="Vernikos G.S."/>
            <person name="Okazaki A."/>
            <person name="Sebaihia M."/>
            <person name="Saunders D."/>
            <person name="Arrowsmith C."/>
            <person name="Carver T."/>
            <person name="Peters N."/>
            <person name="Adlem E."/>
            <person name="Kerhornou A."/>
            <person name="Lord A."/>
            <person name="Murphy L."/>
            <person name="Seeger K."/>
            <person name="Squares R."/>
            <person name="Rutter S."/>
            <person name="Quail M.A."/>
            <person name="Rajandream M.A."/>
            <person name="Harris D."/>
            <person name="Churcher C."/>
            <person name="Bentley S.D."/>
            <person name="Parkhill J."/>
            <person name="Thomson N.R."/>
            <person name="Avison M.B."/>
        </authorList>
    </citation>
    <scope>NUCLEOTIDE SEQUENCE [LARGE SCALE GENOMIC DNA]</scope>
    <source>
        <strain>K279a</strain>
    </source>
</reference>
<accession>B2FJN5</accession>
<name>AROQ_STRMK</name>